<accession>K0I210</accession>
<evidence type="ECO:0000250" key="1">
    <source>
        <dbReference type="UniProtKB" id="Q7XB10"/>
    </source>
</evidence>
<evidence type="ECO:0000255" key="2">
    <source>
        <dbReference type="PROSITE-ProRule" id="PRU01020"/>
    </source>
</evidence>
<evidence type="ECO:0000269" key="3">
    <source>
    </source>
</evidence>
<evidence type="ECO:0000269" key="4">
    <source>
    </source>
</evidence>
<evidence type="ECO:0000303" key="5">
    <source>
    </source>
</evidence>
<evidence type="ECO:0000303" key="6">
    <source>
    </source>
</evidence>
<evidence type="ECO:0000305" key="7">
    <source>
    </source>
</evidence>
<gene>
    <name evidence="5" type="primary">FOMT4</name>
</gene>
<reference key="1">
    <citation type="journal article" date="2012" name="Plant Physiol.">
        <title>A set of regioselective O-methyltransferases gives rise to the complex pattern of methoxylated flavones in sweet basil.</title>
        <authorList>
            <person name="Berim A."/>
            <person name="Hyatt D.C."/>
            <person name="Gang D.R."/>
        </authorList>
    </citation>
    <scope>NUCLEOTIDE SEQUENCE [MRNA]</scope>
    <scope>MUTAGENESIS OF THR-292; MET-296; THR-297 AND THR-298</scope>
    <scope>FUNCTION</scope>
    <scope>CATALYTIC ACTIVITY</scope>
    <scope>BIOPHYSICOCHEMICAL PROPERTIES</scope>
    <scope>TISSUE SPECIFICITY</scope>
    <scope>DEVELOPMENTAL STAGE</scope>
    <source>
        <strain>cv. EMX-1</strain>
        <strain>cv. SD</strain>
        <tissue>Peltate glandular trichome</tissue>
    </source>
</reference>
<reference key="2">
    <citation type="journal article" date="2018" name="Int. J. Biol. Macromol.">
        <title>Nevadensin is a naturally occurring selective inhibitor of human carboxylesterase 1.</title>
        <authorList>
            <person name="Wang Y.-Q."/>
            <person name="Weng Z.-M."/>
            <person name="Dou T.-Y."/>
            <person name="Hou J."/>
            <person name="Wang D.-D."/>
            <person name="Ding L.-L."/>
            <person name="Zou L.-W."/>
            <person name="Yu Y."/>
            <person name="Chen J."/>
            <person name="Tang H."/>
            <person name="Ge G.-B."/>
        </authorList>
    </citation>
    <scope>BIOTECHNOLOGY</scope>
</reference>
<reference key="3">
    <citation type="journal article" date="2019" name="Nat. Prod. Rep.">
        <title>Non-volatile natural products in plant glandular trichomes: chemistry, biological activities and biosynthesis.</title>
        <authorList>
            <person name="Liu Y."/>
            <person name="Jing S.-X."/>
            <person name="Luo S.-H."/>
            <person name="Li S.-H."/>
        </authorList>
    </citation>
    <scope>PATHWAY</scope>
    <scope>REVIEW</scope>
</reference>
<keyword id="KW-0489">Methyltransferase</keyword>
<keyword id="KW-0949">S-adenosyl-L-methionine</keyword>
<keyword id="KW-0808">Transferase</keyword>
<sequence length="336" mass="36961">MAVDKEVELHAQAWDHALSYITPTALSAAVELEIPDILEDHGGLMSLSELSAASGCPREPLYRLMRFLIFHGIFTKSNDCYAQSPLSRVFTRENLGPYMLMQATPVTRSPAGLSGEALKTGTPLYLKSIRGEDSWNDPAYGFHMRAFTNGMAAHARLTAAAIVTNYPTAFNGVRSVVDVGGRHGMAIGKLVEAFPWVRGIAFDLPEVVADAPPRKGVDFVGGDMFESLPKADAVMLMWVLHDWSDDKCIEILKKCKEAIPTSTGKVMIVDAIINEEGEGDEFSGARLSLDMTMMAMTTQGKERSYKEWVHLLNEAGFSKHTVKNIKTIEFVIEAYP</sequence>
<proteinExistence type="evidence at protein level"/>
<name>FOMT4_OCIBA</name>
<feature type="chain" id="PRO_0000456917" description="Flavonoid 6-O-methyltransferase 4">
    <location>
        <begin position="1"/>
        <end position="336"/>
    </location>
</feature>
<feature type="active site" description="Proton acceptor" evidence="2">
    <location>
        <position position="241"/>
    </location>
</feature>
<feature type="binding site" evidence="2">
    <location>
        <position position="140"/>
    </location>
    <ligand>
        <name>S-adenosyl-L-methionine</name>
        <dbReference type="ChEBI" id="CHEBI:59789"/>
    </ligand>
</feature>
<feature type="binding site" evidence="2">
    <location>
        <position position="203"/>
    </location>
    <ligand>
        <name>S-adenosyl-L-methionine</name>
        <dbReference type="ChEBI" id="CHEBI:59789"/>
    </ligand>
</feature>
<feature type="mutagenesis site" description="Slight acquired ability to produce SALV from scutellarein-7-methyl ether (SCU7Me); when associated with V-296; M-297 and A-298. Acquired ability to produce salvigenin (SALV), and slightly ladanein (LAD) from scutellarein-7-methyl ether (SCU7Me); when associated with V-296; M-297 and A-298." evidence="3">
    <original>T</original>
    <variation>I</variation>
    <location>
        <position position="292"/>
    </location>
</feature>
<feature type="mutagenesis site" description="Slight acquired ability to produce SALV from scutellarein-7-methyl ether (SCU7Me); when associated with I-292; M-297 and A-298. Acquired ability to produce salvigenin (SALV), and slightly ladanein (LAD) from scutellarein-7-methyl ether (SCU7Me); when associated with I-292; M-297 and A-298." evidence="3">
    <original>M</original>
    <variation>V</variation>
    <location>
        <position position="296"/>
    </location>
</feature>
<feature type="mutagenesis site" description="Slight acquired ability to produce SALV from scutellarein-7-methyl ether (SCU7Me); when associated with I-292; V-296 and A-298. Acquired ability to produce salvigenin (SALV), and slightly ladanein (LAD) from scutellarein-7-methyl ether (SCU7Me); when associated with I-292; V-296 and A-298." evidence="3">
    <original>T</original>
    <variation>M</variation>
    <location>
        <position position="297"/>
    </location>
</feature>
<feature type="mutagenesis site" description="Acquired ability to produce salvigenin (SALV), and slightly ladanein (LAD) from scutellarein-7-methyl ether (SCU7Me); when associated with I-292; V-296 and M-297." evidence="3">
    <original>T</original>
    <variation>A</variation>
    <location>
        <position position="298"/>
    </location>
</feature>
<dbReference type="EC" id="2.1.1.-" evidence="2 3"/>
<dbReference type="EMBL" id="JQ653278">
    <property type="protein sequence ID" value="AFU50298.1"/>
    <property type="molecule type" value="mRNA"/>
</dbReference>
<dbReference type="SMR" id="K0I210"/>
<dbReference type="BioCyc" id="MetaCyc:MONOMER-18659"/>
<dbReference type="GO" id="GO:0008171">
    <property type="term" value="F:O-methyltransferase activity"/>
    <property type="evidence" value="ECO:0007669"/>
    <property type="project" value="InterPro"/>
</dbReference>
<dbReference type="GO" id="GO:0046983">
    <property type="term" value="F:protein dimerization activity"/>
    <property type="evidence" value="ECO:0007669"/>
    <property type="project" value="InterPro"/>
</dbReference>
<dbReference type="GO" id="GO:0032259">
    <property type="term" value="P:methylation"/>
    <property type="evidence" value="ECO:0007669"/>
    <property type="project" value="UniProtKB-KW"/>
</dbReference>
<dbReference type="Gene3D" id="3.40.50.150">
    <property type="entry name" value="Vaccinia Virus protein VP39"/>
    <property type="match status" value="1"/>
</dbReference>
<dbReference type="Gene3D" id="1.10.10.10">
    <property type="entry name" value="Winged helix-like DNA-binding domain superfamily/Winged helix DNA-binding domain"/>
    <property type="match status" value="1"/>
</dbReference>
<dbReference type="InterPro" id="IPR016461">
    <property type="entry name" value="COMT-like"/>
</dbReference>
<dbReference type="InterPro" id="IPR001077">
    <property type="entry name" value="O_MeTrfase_dom"/>
</dbReference>
<dbReference type="InterPro" id="IPR012967">
    <property type="entry name" value="Plant_O-MeTrfase_dimerisation"/>
</dbReference>
<dbReference type="InterPro" id="IPR029063">
    <property type="entry name" value="SAM-dependent_MTases_sf"/>
</dbReference>
<dbReference type="InterPro" id="IPR036388">
    <property type="entry name" value="WH-like_DNA-bd_sf"/>
</dbReference>
<dbReference type="InterPro" id="IPR036390">
    <property type="entry name" value="WH_DNA-bd_sf"/>
</dbReference>
<dbReference type="PANTHER" id="PTHR11746">
    <property type="entry name" value="O-METHYLTRANSFERASE"/>
    <property type="match status" value="1"/>
</dbReference>
<dbReference type="Pfam" id="PF08100">
    <property type="entry name" value="Dimerisation"/>
    <property type="match status" value="1"/>
</dbReference>
<dbReference type="Pfam" id="PF00891">
    <property type="entry name" value="Methyltransf_2"/>
    <property type="match status" value="1"/>
</dbReference>
<dbReference type="PIRSF" id="PIRSF005739">
    <property type="entry name" value="O-mtase"/>
    <property type="match status" value="1"/>
</dbReference>
<dbReference type="SUPFAM" id="SSF53335">
    <property type="entry name" value="S-adenosyl-L-methionine-dependent methyltransferases"/>
    <property type="match status" value="1"/>
</dbReference>
<dbReference type="SUPFAM" id="SSF46785">
    <property type="entry name" value="Winged helix' DNA-binding domain"/>
    <property type="match status" value="1"/>
</dbReference>
<dbReference type="PROSITE" id="PS51683">
    <property type="entry name" value="SAM_OMT_II"/>
    <property type="match status" value="1"/>
</dbReference>
<protein>
    <recommendedName>
        <fullName evidence="5">Flavonoid 6-O-methyltransferase 4</fullName>
        <shortName evidence="5">ObFOMT4</shortName>
        <ecNumber evidence="2 3">2.1.1.-</ecNumber>
    </recommendedName>
    <alternativeName>
        <fullName evidence="7">Ladanein 6-O-methyltransferase</fullName>
        <ecNumber evidence="3">2.1.1.-</ecNumber>
    </alternativeName>
    <alternativeName>
        <fullName evidence="7">Scutellarein-7-methyl ether 6-O-methyltransferase</fullName>
        <ecNumber evidence="3">2.1.1.-</ecNumber>
    </alternativeName>
</protein>
<comment type="function">
    <text evidence="3">Flavonoid 6-O-methyltransferase involved in the biosynthesis of polymethoxylated flavonoids natural products such as nevadensin and salvigenin (SALV), aroma compounds which contribute to the flavor of sweet basil, and exhibit pharmacological activities such as anti-allergic, anti-oxidant, antibacterial, anti-proliferative, and anti-inflammatory effects (PubMed:22923679). Catalyzes S-adenosylmethionine-dependent regioselective 6-O-methylation of flavonoids; active on various hydroxylated flavonoid substrates, including scutellarein-7-methyl ether (SCU7Me) and ladanein (LAD) (PubMed:22923679).</text>
</comment>
<comment type="catalytic activity">
    <reaction evidence="3">
        <text>ladanein + S-adenosyl-L-methionine = salvigenin + S-adenosyl-L-homocysteine + H(+)</text>
        <dbReference type="Rhea" id="RHEA:73247"/>
        <dbReference type="ChEBI" id="CHEBI:15378"/>
        <dbReference type="ChEBI" id="CHEBI:57856"/>
        <dbReference type="ChEBI" id="CHEBI:59789"/>
        <dbReference type="ChEBI" id="CHEBI:192702"/>
        <dbReference type="ChEBI" id="CHEBI:192703"/>
    </reaction>
    <physiologicalReaction direction="left-to-right" evidence="7">
        <dbReference type="Rhea" id="RHEA:73248"/>
    </physiologicalReaction>
</comment>
<comment type="catalytic activity">
    <reaction evidence="3">
        <text>scutellarein 7-methyl ether + S-adenosyl-L-methionine = cirsimaritin + S-adenosyl-L-homocysteine + H(+)</text>
        <dbReference type="Rhea" id="RHEA:73243"/>
        <dbReference type="ChEBI" id="CHEBI:15378"/>
        <dbReference type="ChEBI" id="CHEBI:57856"/>
        <dbReference type="ChEBI" id="CHEBI:59789"/>
        <dbReference type="ChEBI" id="CHEBI:81337"/>
        <dbReference type="ChEBI" id="CHEBI:192701"/>
    </reaction>
    <physiologicalReaction direction="left-to-right" evidence="7">
        <dbReference type="Rhea" id="RHEA:73244"/>
    </physiologicalReaction>
</comment>
<comment type="biophysicochemical properties">
    <kinetics>
        <KM evidence="3">98 nM for scutellarein-7-methyl ether (in the presence of S-adenosyl-L-methionine)</KM>
        <KM evidence="3">54 nM for ladanein (in the presence of S-adenosyl-L-methionine)</KM>
        <KM evidence="3">21 uM for S-adenosyl-L-methionine (in the presence of scutellarein)</KM>
        <text evidence="3">kcat is 130x10(-3) sec(-1) with scutellarein-7-methyl ether as substrate (in the presence of S-adenosyl-L-methionine) (PubMed:22923679). kcat is 140x10(-3) sec(-1) with ladanein as substrate (in the presence of S-adenosyl-L-methionine) (PubMed:22923679).</text>
    </kinetics>
</comment>
<comment type="pathway">
    <text evidence="6">Flavonoid metabolism.</text>
</comment>
<comment type="subunit">
    <text evidence="1">Homodimer.</text>
</comment>
<comment type="tissue specificity">
    <text evidence="3">Expressed in leaves.</text>
</comment>
<comment type="developmental stage">
    <text evidence="3">Accumulates in young leaves but fades out during leaves aging.</text>
</comment>
<comment type="biotechnology">
    <text evidence="4">Nevadensin is a selective inhibitor of human carboxylesterase 1 (hCE-1), a key enzyme responsible for the hydrolysis of a wide range of endogenous and xenobiotic esters.</text>
</comment>
<comment type="similarity">
    <text evidence="2">Belongs to the class I-like SAM-binding methyltransferase superfamily. Cation-independent O-methyltransferase family.</text>
</comment>
<organism>
    <name type="scientific">Ocimum basilicum</name>
    <name type="common">Sweet basil</name>
    <dbReference type="NCBI Taxonomy" id="39350"/>
    <lineage>
        <taxon>Eukaryota</taxon>
        <taxon>Viridiplantae</taxon>
        <taxon>Streptophyta</taxon>
        <taxon>Embryophyta</taxon>
        <taxon>Tracheophyta</taxon>
        <taxon>Spermatophyta</taxon>
        <taxon>Magnoliopsida</taxon>
        <taxon>eudicotyledons</taxon>
        <taxon>Gunneridae</taxon>
        <taxon>Pentapetalae</taxon>
        <taxon>asterids</taxon>
        <taxon>lamiids</taxon>
        <taxon>Lamiales</taxon>
        <taxon>Lamiaceae</taxon>
        <taxon>Nepetoideae</taxon>
        <taxon>Ocimeae</taxon>
        <taxon>Ociminae</taxon>
        <taxon>Ocimum</taxon>
    </lineage>
</organism>